<sequence length="106" mass="11612">MRRRSSMDINRAIRVAVDTGNVVLGTKQAIKNIKHGEGQLVIIADNCAKDVREDIFYYTQLSETPVYTHQATSIELGAICGKPFPVSALLVLEPGNSAILNVNNEE</sequence>
<reference key="1">
    <citation type="submission" date="2007-06" db="EMBL/GenBank/DDBJ databases">
        <title>Complete sequence of Methanococcus maripaludis C7.</title>
        <authorList>
            <consortium name="US DOE Joint Genome Institute"/>
            <person name="Copeland A."/>
            <person name="Lucas S."/>
            <person name="Lapidus A."/>
            <person name="Barry K."/>
            <person name="Glavina del Rio T."/>
            <person name="Dalin E."/>
            <person name="Tice H."/>
            <person name="Pitluck S."/>
            <person name="Clum A."/>
            <person name="Schmutz J."/>
            <person name="Larimer F."/>
            <person name="Land M."/>
            <person name="Hauser L."/>
            <person name="Kyrpides N."/>
            <person name="Anderson I."/>
            <person name="Sieprawska-Lupa M."/>
            <person name="Whitman W.B."/>
            <person name="Richardson P."/>
        </authorList>
    </citation>
    <scope>NUCLEOTIDE SEQUENCE [LARGE SCALE GENOMIC DNA]</scope>
    <source>
        <strain>C7 / ATCC BAA-1331</strain>
    </source>
</reference>
<feature type="chain" id="PRO_1000081314" description="Large ribosomal subunit protein eL30">
    <location>
        <begin position="1"/>
        <end position="106"/>
    </location>
</feature>
<gene>
    <name evidence="1" type="primary">rpl30e</name>
    <name type="ordered locus">MmarC7_0610</name>
</gene>
<name>RL30E_METM7</name>
<protein>
    <recommendedName>
        <fullName evidence="1">Large ribosomal subunit protein eL30</fullName>
    </recommendedName>
    <alternativeName>
        <fullName evidence="2">50S ribosomal protein L30e</fullName>
    </alternativeName>
</protein>
<organism>
    <name type="scientific">Methanococcus maripaludis (strain C7 / ATCC BAA-1331)</name>
    <dbReference type="NCBI Taxonomy" id="426368"/>
    <lineage>
        <taxon>Archaea</taxon>
        <taxon>Methanobacteriati</taxon>
        <taxon>Methanobacteriota</taxon>
        <taxon>Methanomada group</taxon>
        <taxon>Methanococci</taxon>
        <taxon>Methanococcales</taxon>
        <taxon>Methanococcaceae</taxon>
        <taxon>Methanococcus</taxon>
    </lineage>
</organism>
<evidence type="ECO:0000255" key="1">
    <source>
        <dbReference type="HAMAP-Rule" id="MF_00481"/>
    </source>
</evidence>
<evidence type="ECO:0000305" key="2"/>
<dbReference type="EMBL" id="CP000745">
    <property type="protein sequence ID" value="ABR65677.1"/>
    <property type="molecule type" value="Genomic_DNA"/>
</dbReference>
<dbReference type="SMR" id="A6VGV1"/>
<dbReference type="STRING" id="426368.MmarC7_0610"/>
<dbReference type="KEGG" id="mmz:MmarC7_0610"/>
<dbReference type="eggNOG" id="arCOG01752">
    <property type="taxonomic scope" value="Archaea"/>
</dbReference>
<dbReference type="HOGENOM" id="CLU_130502_1_0_2"/>
<dbReference type="OrthoDB" id="10759at2157"/>
<dbReference type="GO" id="GO:0022625">
    <property type="term" value="C:cytosolic large ribosomal subunit"/>
    <property type="evidence" value="ECO:0007669"/>
    <property type="project" value="InterPro"/>
</dbReference>
<dbReference type="GO" id="GO:0003723">
    <property type="term" value="F:RNA binding"/>
    <property type="evidence" value="ECO:0007669"/>
    <property type="project" value="InterPro"/>
</dbReference>
<dbReference type="GO" id="GO:0003735">
    <property type="term" value="F:structural constituent of ribosome"/>
    <property type="evidence" value="ECO:0007669"/>
    <property type="project" value="InterPro"/>
</dbReference>
<dbReference type="GO" id="GO:0006412">
    <property type="term" value="P:translation"/>
    <property type="evidence" value="ECO:0007669"/>
    <property type="project" value="UniProtKB-UniRule"/>
</dbReference>
<dbReference type="Gene3D" id="3.30.1330.30">
    <property type="match status" value="1"/>
</dbReference>
<dbReference type="HAMAP" id="MF_00481">
    <property type="entry name" value="Ribosomal_eL30"/>
    <property type="match status" value="1"/>
</dbReference>
<dbReference type="InterPro" id="IPR000231">
    <property type="entry name" value="Ribosomal_eL30"/>
</dbReference>
<dbReference type="InterPro" id="IPR039109">
    <property type="entry name" value="Ribosomal_eL30-like"/>
</dbReference>
<dbReference type="InterPro" id="IPR029064">
    <property type="entry name" value="Ribosomal_eL30-like_sf"/>
</dbReference>
<dbReference type="InterPro" id="IPR022991">
    <property type="entry name" value="Ribosomal_eL30_CS"/>
</dbReference>
<dbReference type="InterPro" id="IPR004038">
    <property type="entry name" value="Ribosomal_eL8/eL30/eS12/Gad45"/>
</dbReference>
<dbReference type="NCBIfam" id="NF002172">
    <property type="entry name" value="PRK01018.1"/>
    <property type="match status" value="1"/>
</dbReference>
<dbReference type="PANTHER" id="PTHR11449">
    <property type="entry name" value="RIBOSOMAL PROTEIN L30"/>
    <property type="match status" value="1"/>
</dbReference>
<dbReference type="Pfam" id="PF01248">
    <property type="entry name" value="Ribosomal_L7Ae"/>
    <property type="match status" value="1"/>
</dbReference>
<dbReference type="SUPFAM" id="SSF55315">
    <property type="entry name" value="L30e-like"/>
    <property type="match status" value="1"/>
</dbReference>
<dbReference type="PROSITE" id="PS00709">
    <property type="entry name" value="RIBOSOMAL_L30E_1"/>
    <property type="match status" value="1"/>
</dbReference>
<dbReference type="PROSITE" id="PS00993">
    <property type="entry name" value="RIBOSOMAL_L30E_2"/>
    <property type="match status" value="1"/>
</dbReference>
<keyword id="KW-0687">Ribonucleoprotein</keyword>
<keyword id="KW-0689">Ribosomal protein</keyword>
<proteinExistence type="inferred from homology"/>
<comment type="similarity">
    <text evidence="1">Belongs to the eukaryotic ribosomal protein eL30 family.</text>
</comment>
<accession>A6VGV1</accession>